<name>DPO3_STAAC</name>
<proteinExistence type="inferred from homology"/>
<dbReference type="EC" id="2.7.7.7" evidence="1"/>
<dbReference type="EMBL" id="CP000046">
    <property type="protein sequence ID" value="AAW38114.1"/>
    <property type="status" value="ALT_INIT"/>
    <property type="molecule type" value="Genomic_DNA"/>
</dbReference>
<dbReference type="SMR" id="Q5HGG7"/>
<dbReference type="KEGG" id="sac:SACOL1283"/>
<dbReference type="HOGENOM" id="CLU_003297_2_0_9"/>
<dbReference type="Proteomes" id="UP000000530">
    <property type="component" value="Chromosome"/>
</dbReference>
<dbReference type="GO" id="GO:0005737">
    <property type="term" value="C:cytoplasm"/>
    <property type="evidence" value="ECO:0007669"/>
    <property type="project" value="UniProtKB-SubCell"/>
</dbReference>
<dbReference type="GO" id="GO:0008408">
    <property type="term" value="F:3'-5' exonuclease activity"/>
    <property type="evidence" value="ECO:0007669"/>
    <property type="project" value="UniProtKB-UniRule"/>
</dbReference>
<dbReference type="GO" id="GO:0003677">
    <property type="term" value="F:DNA binding"/>
    <property type="evidence" value="ECO:0007669"/>
    <property type="project" value="UniProtKB-UniRule"/>
</dbReference>
<dbReference type="GO" id="GO:0003887">
    <property type="term" value="F:DNA-directed DNA polymerase activity"/>
    <property type="evidence" value="ECO:0007669"/>
    <property type="project" value="UniProtKB-UniRule"/>
</dbReference>
<dbReference type="GO" id="GO:0006261">
    <property type="term" value="P:DNA-templated DNA replication"/>
    <property type="evidence" value="ECO:0007669"/>
    <property type="project" value="UniProtKB-UniRule"/>
</dbReference>
<dbReference type="CDD" id="cd06127">
    <property type="entry name" value="DEDDh"/>
    <property type="match status" value="1"/>
</dbReference>
<dbReference type="CDD" id="cd07435">
    <property type="entry name" value="PHP_PolIIIA_POLC"/>
    <property type="match status" value="1"/>
</dbReference>
<dbReference type="CDD" id="cd04484">
    <property type="entry name" value="polC_OBF"/>
    <property type="match status" value="1"/>
</dbReference>
<dbReference type="FunFam" id="3.30.420.10:FF:000045">
    <property type="entry name" value="3'-5' exonuclease DinG"/>
    <property type="match status" value="1"/>
</dbReference>
<dbReference type="Gene3D" id="1.10.150.870">
    <property type="match status" value="1"/>
</dbReference>
<dbReference type="Gene3D" id="3.30.1900.20">
    <property type="match status" value="2"/>
</dbReference>
<dbReference type="Gene3D" id="6.10.140.1510">
    <property type="match status" value="1"/>
</dbReference>
<dbReference type="Gene3D" id="3.20.20.140">
    <property type="entry name" value="Metal-dependent hydrolases"/>
    <property type="match status" value="1"/>
</dbReference>
<dbReference type="Gene3D" id="2.40.50.140">
    <property type="entry name" value="Nucleic acid-binding proteins"/>
    <property type="match status" value="1"/>
</dbReference>
<dbReference type="Gene3D" id="1.10.150.700">
    <property type="entry name" value="PolC, middle finger domain"/>
    <property type="match status" value="1"/>
</dbReference>
<dbReference type="Gene3D" id="3.30.420.10">
    <property type="entry name" value="Ribonuclease H-like superfamily/Ribonuclease H"/>
    <property type="match status" value="1"/>
</dbReference>
<dbReference type="HAMAP" id="MF_00356">
    <property type="entry name" value="DNApol_PolC"/>
    <property type="match status" value="1"/>
</dbReference>
<dbReference type="InterPro" id="IPR011708">
    <property type="entry name" value="DNA_pol3_alpha_NTPase_dom"/>
</dbReference>
<dbReference type="InterPro" id="IPR040982">
    <property type="entry name" value="DNA_pol3_finger"/>
</dbReference>
<dbReference type="InterPro" id="IPR024754">
    <property type="entry name" value="DNA_PolC-like_N_II"/>
</dbReference>
<dbReference type="InterPro" id="IPR028112">
    <property type="entry name" value="DNA_PolC-type_N_I"/>
</dbReference>
<dbReference type="InterPro" id="IPR004805">
    <property type="entry name" value="DnaE2/DnaE/PolC"/>
</dbReference>
<dbReference type="InterPro" id="IPR029460">
    <property type="entry name" value="DNAPol_HHH"/>
</dbReference>
<dbReference type="InterPro" id="IPR006054">
    <property type="entry name" value="DnaQ"/>
</dbReference>
<dbReference type="InterPro" id="IPR013520">
    <property type="entry name" value="Exonuclease_RNaseT/DNA_pol3"/>
</dbReference>
<dbReference type="InterPro" id="IPR012340">
    <property type="entry name" value="NA-bd_OB-fold"/>
</dbReference>
<dbReference type="InterPro" id="IPR004013">
    <property type="entry name" value="PHP_dom"/>
</dbReference>
<dbReference type="InterPro" id="IPR003141">
    <property type="entry name" value="Pol/His_phosphatase_N"/>
</dbReference>
<dbReference type="InterPro" id="IPR006308">
    <property type="entry name" value="Pol_III_a_PolC-type_gram_pos"/>
</dbReference>
<dbReference type="InterPro" id="IPR044923">
    <property type="entry name" value="PolC_middle_finger_sf"/>
</dbReference>
<dbReference type="InterPro" id="IPR012337">
    <property type="entry name" value="RNaseH-like_sf"/>
</dbReference>
<dbReference type="InterPro" id="IPR036397">
    <property type="entry name" value="RNaseH_sf"/>
</dbReference>
<dbReference type="NCBIfam" id="TIGR00573">
    <property type="entry name" value="dnaq"/>
    <property type="match status" value="1"/>
</dbReference>
<dbReference type="NCBIfam" id="TIGR01405">
    <property type="entry name" value="polC_Gram_pos"/>
    <property type="match status" value="1"/>
</dbReference>
<dbReference type="NCBIfam" id="NF001688">
    <property type="entry name" value="PRK00448.1"/>
    <property type="match status" value="1"/>
</dbReference>
<dbReference type="PANTHER" id="PTHR32294:SF5">
    <property type="entry name" value="DNA POLYMERASE III POLC-TYPE"/>
    <property type="match status" value="1"/>
</dbReference>
<dbReference type="PANTHER" id="PTHR32294">
    <property type="entry name" value="DNA POLYMERASE III SUBUNIT ALPHA"/>
    <property type="match status" value="1"/>
</dbReference>
<dbReference type="Pfam" id="PF14480">
    <property type="entry name" value="DNA_pol3_a_NI"/>
    <property type="match status" value="1"/>
</dbReference>
<dbReference type="Pfam" id="PF11490">
    <property type="entry name" value="DNA_pol3_a_NII"/>
    <property type="match status" value="1"/>
</dbReference>
<dbReference type="Pfam" id="PF07733">
    <property type="entry name" value="DNA_pol3_alpha"/>
    <property type="match status" value="2"/>
</dbReference>
<dbReference type="Pfam" id="PF17657">
    <property type="entry name" value="DNA_pol3_finger"/>
    <property type="match status" value="1"/>
</dbReference>
<dbReference type="Pfam" id="PF14579">
    <property type="entry name" value="HHH_6"/>
    <property type="match status" value="1"/>
</dbReference>
<dbReference type="Pfam" id="PF02811">
    <property type="entry name" value="PHP"/>
    <property type="match status" value="2"/>
</dbReference>
<dbReference type="Pfam" id="PF00929">
    <property type="entry name" value="RNase_T"/>
    <property type="match status" value="1"/>
</dbReference>
<dbReference type="SMART" id="SM00479">
    <property type="entry name" value="EXOIII"/>
    <property type="match status" value="1"/>
</dbReference>
<dbReference type="SMART" id="SM00481">
    <property type="entry name" value="POLIIIAc"/>
    <property type="match status" value="1"/>
</dbReference>
<dbReference type="SUPFAM" id="SSF81585">
    <property type="entry name" value="PsbU/PolX domain-like"/>
    <property type="match status" value="1"/>
</dbReference>
<dbReference type="SUPFAM" id="SSF53098">
    <property type="entry name" value="Ribonuclease H-like"/>
    <property type="match status" value="1"/>
</dbReference>
<organism>
    <name type="scientific">Staphylococcus aureus (strain COL)</name>
    <dbReference type="NCBI Taxonomy" id="93062"/>
    <lineage>
        <taxon>Bacteria</taxon>
        <taxon>Bacillati</taxon>
        <taxon>Bacillota</taxon>
        <taxon>Bacilli</taxon>
        <taxon>Bacillales</taxon>
        <taxon>Staphylococcaceae</taxon>
        <taxon>Staphylococcus</taxon>
    </lineage>
</organism>
<protein>
    <recommendedName>
        <fullName evidence="1">DNA polymerase III PolC-type</fullName>
        <shortName evidence="1">PolIII</shortName>
        <ecNumber evidence="1">2.7.7.7</ecNumber>
    </recommendedName>
</protein>
<evidence type="ECO:0000255" key="1">
    <source>
        <dbReference type="HAMAP-Rule" id="MF_00356"/>
    </source>
</evidence>
<evidence type="ECO:0000305" key="2"/>
<accession>Q5HGG7</accession>
<comment type="function">
    <text evidence="1">Required for replicative DNA synthesis. This DNA polymerase also exhibits 3' to 5' exonuclease activity.</text>
</comment>
<comment type="catalytic activity">
    <reaction evidence="1">
        <text>DNA(n) + a 2'-deoxyribonucleoside 5'-triphosphate = DNA(n+1) + diphosphate</text>
        <dbReference type="Rhea" id="RHEA:22508"/>
        <dbReference type="Rhea" id="RHEA-COMP:17339"/>
        <dbReference type="Rhea" id="RHEA-COMP:17340"/>
        <dbReference type="ChEBI" id="CHEBI:33019"/>
        <dbReference type="ChEBI" id="CHEBI:61560"/>
        <dbReference type="ChEBI" id="CHEBI:173112"/>
        <dbReference type="EC" id="2.7.7.7"/>
    </reaction>
</comment>
<comment type="subcellular location">
    <subcellularLocation>
        <location evidence="1">Cytoplasm</location>
    </subcellularLocation>
</comment>
<comment type="similarity">
    <text evidence="1">Belongs to the DNA polymerase type-C family. PolC subfamily.</text>
</comment>
<comment type="sequence caution" evidence="2">
    <conflict type="erroneous initiation">
        <sequence resource="EMBL-CDS" id="AAW38114"/>
    </conflict>
</comment>
<gene>
    <name evidence="1" type="primary">polC</name>
    <name type="ordered locus">SACOL1283</name>
</gene>
<reference key="1">
    <citation type="journal article" date="2005" name="J. Bacteriol.">
        <title>Insights on evolution of virulence and resistance from the complete genome analysis of an early methicillin-resistant Staphylococcus aureus strain and a biofilm-producing methicillin-resistant Staphylococcus epidermidis strain.</title>
        <authorList>
            <person name="Gill S.R."/>
            <person name="Fouts D.E."/>
            <person name="Archer G.L."/>
            <person name="Mongodin E.F."/>
            <person name="DeBoy R.T."/>
            <person name="Ravel J."/>
            <person name="Paulsen I.T."/>
            <person name="Kolonay J.F."/>
            <person name="Brinkac L.M."/>
            <person name="Beanan M.J."/>
            <person name="Dodson R.J."/>
            <person name="Daugherty S.C."/>
            <person name="Madupu R."/>
            <person name="Angiuoli S.V."/>
            <person name="Durkin A.S."/>
            <person name="Haft D.H."/>
            <person name="Vamathevan J.J."/>
            <person name="Khouri H."/>
            <person name="Utterback T.R."/>
            <person name="Lee C."/>
            <person name="Dimitrov G."/>
            <person name="Jiang L."/>
            <person name="Qin H."/>
            <person name="Weidman J."/>
            <person name="Tran K."/>
            <person name="Kang K.H."/>
            <person name="Hance I.R."/>
            <person name="Nelson K.E."/>
            <person name="Fraser C.M."/>
        </authorList>
    </citation>
    <scope>NUCLEOTIDE SEQUENCE [LARGE SCALE GENOMIC DNA]</scope>
    <source>
        <strain>COL</strain>
    </source>
</reference>
<sequence>MAMTEQQKFKVLADQIKISNQLDAEILNSGELTRIDVSNKNRTWEFHITLPQFLAHEDYLLFINAIEQEFKDIANVTCRFTVTNGTNQDEHAIKYFGHCIDQTALSPKVKGQLKQKKLIMSGKVLKVMVSNDIERNHFDKACNGSLIKAFRNCGFDIDKIIFETNDNDQEQNLASLEAHIQEEDEQSARLATEKLEKMKAEKAKQQDNNESAVDKCQIGKPIQIENIKPIESIIEEEFKVAIEGVIFDINLKELKSGRHIVEIKVTDYTDSLVLKMFTRKNKDDLEHFKALSVGKWVRAQGRIEEDTFIRDLVMMMSDIEEIKKATKKDKAEEKRVEFHLHTAMSQMDGIPNIGAYVKQAADWGHPAIAVTDHNVVQAFPDAHAAAEKHGIKMIYGMEGMLVDDGVPIAYKPQDVVLKDATYVVFDVETTGLSNQYDKIIELAAVKVHNGEIIDKFERFSNPHERLSETIINLTHITDDMLVDAPEIEEVLTEFKEWVGDAIFVAHNASFDMGFIDTGYERLGFGPSTNGVIDTLELSRTINTEYGKHGLNFLAKKYGVELTQHHRAIYDTEATAYIFIKMVQQMKELGVLNHNEINKKLSNEDAYKRARPSHVTLIVQNQQGLKNLFKIVSASLVKYFYRTPRIPRSLLDEYREGLLVGTACDEGELFTAVMQKDQSQVEKIAKYYDFIEIQPPALYQDLIDRELIRDTETLHEIYQRLIHAGDTAGIPVIATGNAHYLFEHDGIARKILIASQPGNPLNRSTLPEAHFRTTDEMLNEFHFLGEEKAHEIVVKNTNELADRIERVVPIKDELYTPRMEGANEEIRELSYANARKLYGEDLPQIVIDRLEKELKSIIGNGFAVIYLISQRLVKKSLDDGYLVGSRGSVGSSFVATMTEITEVNPLPPHYICPNCKTSEFFNDGSVGSGFDLPDKTCETCGAPLIKEGQDIPFETFLGFKGDKVPDIDLNFSGEYQPNAHNYTKVLFGEDKVFRAGTIGTVAEKTAFGYVKGYLNDQGIHKRGAEIDRLVKGCTGVKRTTGQHPGGIIVVPDYMDIYDFTPIQYPADDQNSAWMTTHFDFHSIHDNVLKLDILGHDDPTMIRMLQDLSGIDPKTIPVDDKEVMQIFSTPESLGVTEDEILCKTGTFGVPEFGTGFVRQMLEDTKPTTFSELVQISGLSHGTDVWLGNAQELIKTGICDLSSVIGCRDDIMVYLMYAGLEPSMAFKIMESVRKGKGLTEEMIETMKENEVPDWYLDSCLKIKYMFPKAHAAAYVLMAVRIAYFKVHHPLYYYASYFTIRASDFDLITMIKDKTSIRNTVKDMYSRYMDLGKKEKDVLTVLEIMNEMAHRGYRMQPISLEKSQAFEFIIEGDTLIPPFISVPGLGENVAKRIVEARDDGPFLSKEDLNKKAGLSQKIIEYLDELGSLPNLPDKAQLSIFDM</sequence>
<keyword id="KW-0963">Cytoplasm</keyword>
<keyword id="KW-0235">DNA replication</keyword>
<keyword id="KW-0239">DNA-directed DNA polymerase</keyword>
<keyword id="KW-0269">Exonuclease</keyword>
<keyword id="KW-0378">Hydrolase</keyword>
<keyword id="KW-0540">Nuclease</keyword>
<keyword id="KW-0548">Nucleotidyltransferase</keyword>
<keyword id="KW-0808">Transferase</keyword>
<feature type="chain" id="PRO_0000204586" description="DNA polymerase III PolC-type">
    <location>
        <begin position="1"/>
        <end position="1438"/>
    </location>
</feature>
<feature type="domain" description="Exonuclease">
    <location>
        <begin position="422"/>
        <end position="578"/>
    </location>
</feature>